<comment type="function">
    <text evidence="1">Catalyzes the attachment of tyrosine to tRNA(Tyr) in a two-step reaction: tyrosine is first activated by ATP to form Tyr-AMP and then transferred to the acceptor end of tRNA(Tyr).</text>
</comment>
<comment type="catalytic activity">
    <reaction evidence="1">
        <text>tRNA(Tyr) + L-tyrosine + ATP = L-tyrosyl-tRNA(Tyr) + AMP + diphosphate + H(+)</text>
        <dbReference type="Rhea" id="RHEA:10220"/>
        <dbReference type="Rhea" id="RHEA-COMP:9706"/>
        <dbReference type="Rhea" id="RHEA-COMP:9707"/>
        <dbReference type="ChEBI" id="CHEBI:15378"/>
        <dbReference type="ChEBI" id="CHEBI:30616"/>
        <dbReference type="ChEBI" id="CHEBI:33019"/>
        <dbReference type="ChEBI" id="CHEBI:58315"/>
        <dbReference type="ChEBI" id="CHEBI:78442"/>
        <dbReference type="ChEBI" id="CHEBI:78536"/>
        <dbReference type="ChEBI" id="CHEBI:456215"/>
        <dbReference type="EC" id="6.1.1.1"/>
    </reaction>
</comment>
<comment type="subunit">
    <text evidence="1">Homodimer.</text>
</comment>
<comment type="subcellular location">
    <subcellularLocation>
        <location evidence="1">Cytoplasm</location>
    </subcellularLocation>
</comment>
<comment type="similarity">
    <text evidence="1">Belongs to the class-I aminoacyl-tRNA synthetase family. TyrS type 1 subfamily.</text>
</comment>
<sequence length="415" mass="47115">MHSLIKDLKARNLINNITNEEKLIKALEKNKGIYVGFDPSADSLHLGNYIMIMLLKRFRLYNIKTLALVGGATGMIGDPSGKSAERNLLDKTILEKNIAKIKFQLEKFTNSQVINNYVFYENMTFLDFLRDVGKLININYLLEKEIINSRLSVGISYTEFSYNLLQGYDFLQLYKNDNIAIQAGGSDQWGNITTGIEMIRKNLGDDNIACGLTINLLTNSEGKKFGKSEKGAIYLDENKSTVYEMYQFLINQSDADVEKLLNFLTLIDVEEIKKIMQAHKNNPALRVAQKALAKAVVVDIHGQQKYEQALHISEVLFNGSISTLNQEELEIAIKSLPATKLDKDEIKIIDLLNLANISSSNRIARDFLNTGSILINDIKINDENFLVKKQDAINQKFSIIRKGKRNYFLILWNKD</sequence>
<reference key="1">
    <citation type="submission" date="2008-02" db="EMBL/GenBank/DDBJ databases">
        <title>Genome sequence of Ureaplasma parvum serovar 3.</title>
        <authorList>
            <person name="Methe B.A."/>
            <person name="Glass J."/>
            <person name="Waites K."/>
            <person name="Shrivastava S."/>
        </authorList>
    </citation>
    <scope>NUCLEOTIDE SEQUENCE [LARGE SCALE GENOMIC DNA]</scope>
    <source>
        <strain>ATCC 27815 / 27 / NCTC 11736</strain>
    </source>
</reference>
<accession>B1AIA6</accession>
<name>SYY_UREP2</name>
<feature type="chain" id="PRO_1000088641" description="Tyrosine--tRNA ligase">
    <location>
        <begin position="1"/>
        <end position="415"/>
    </location>
</feature>
<feature type="domain" description="S4 RNA-binding" evidence="1">
    <location>
        <begin position="346"/>
        <end position="413"/>
    </location>
</feature>
<feature type="short sequence motif" description="'HIGH' region">
    <location>
        <begin position="39"/>
        <end position="48"/>
    </location>
</feature>
<feature type="short sequence motif" description="'KMSKS' region">
    <location>
        <begin position="224"/>
        <end position="228"/>
    </location>
</feature>
<feature type="binding site" evidence="1">
    <location>
        <position position="34"/>
    </location>
    <ligand>
        <name>L-tyrosine</name>
        <dbReference type="ChEBI" id="CHEBI:58315"/>
    </ligand>
</feature>
<feature type="binding site" evidence="1">
    <location>
        <position position="162"/>
    </location>
    <ligand>
        <name>L-tyrosine</name>
        <dbReference type="ChEBI" id="CHEBI:58315"/>
    </ligand>
</feature>
<feature type="binding site" evidence="1">
    <location>
        <position position="166"/>
    </location>
    <ligand>
        <name>L-tyrosine</name>
        <dbReference type="ChEBI" id="CHEBI:58315"/>
    </ligand>
</feature>
<feature type="binding site" evidence="1">
    <location>
        <position position="227"/>
    </location>
    <ligand>
        <name>ATP</name>
        <dbReference type="ChEBI" id="CHEBI:30616"/>
    </ligand>
</feature>
<keyword id="KW-0030">Aminoacyl-tRNA synthetase</keyword>
<keyword id="KW-0067">ATP-binding</keyword>
<keyword id="KW-0963">Cytoplasm</keyword>
<keyword id="KW-0436">Ligase</keyword>
<keyword id="KW-0547">Nucleotide-binding</keyword>
<keyword id="KW-0648">Protein biosynthesis</keyword>
<keyword id="KW-0694">RNA-binding</keyword>
<organism>
    <name type="scientific">Ureaplasma parvum serovar 3 (strain ATCC 27815 / 27 / NCTC 11736)</name>
    <dbReference type="NCBI Taxonomy" id="505682"/>
    <lineage>
        <taxon>Bacteria</taxon>
        <taxon>Bacillati</taxon>
        <taxon>Mycoplasmatota</taxon>
        <taxon>Mycoplasmoidales</taxon>
        <taxon>Mycoplasmoidaceae</taxon>
        <taxon>Ureaplasma</taxon>
    </lineage>
</organism>
<gene>
    <name evidence="1" type="primary">tyrS</name>
    <name type="ordered locus">UPA3_0123</name>
</gene>
<proteinExistence type="inferred from homology"/>
<evidence type="ECO:0000255" key="1">
    <source>
        <dbReference type="HAMAP-Rule" id="MF_02006"/>
    </source>
</evidence>
<dbReference type="EC" id="6.1.1.1" evidence="1"/>
<dbReference type="EMBL" id="CP000942">
    <property type="protein sequence ID" value="ACA32771.1"/>
    <property type="molecule type" value="Genomic_DNA"/>
</dbReference>
<dbReference type="RefSeq" id="WP_006688855.1">
    <property type="nucleotide sequence ID" value="NC_010503.1"/>
</dbReference>
<dbReference type="SMR" id="B1AIA6"/>
<dbReference type="GeneID" id="29672276"/>
<dbReference type="KEGG" id="upa:UPA3_0123"/>
<dbReference type="HOGENOM" id="CLU_024003_0_2_14"/>
<dbReference type="Proteomes" id="UP000002162">
    <property type="component" value="Chromosome"/>
</dbReference>
<dbReference type="GO" id="GO:0005829">
    <property type="term" value="C:cytosol"/>
    <property type="evidence" value="ECO:0007669"/>
    <property type="project" value="TreeGrafter"/>
</dbReference>
<dbReference type="GO" id="GO:0005524">
    <property type="term" value="F:ATP binding"/>
    <property type="evidence" value="ECO:0007669"/>
    <property type="project" value="UniProtKB-UniRule"/>
</dbReference>
<dbReference type="GO" id="GO:0003723">
    <property type="term" value="F:RNA binding"/>
    <property type="evidence" value="ECO:0007669"/>
    <property type="project" value="UniProtKB-KW"/>
</dbReference>
<dbReference type="GO" id="GO:0004831">
    <property type="term" value="F:tyrosine-tRNA ligase activity"/>
    <property type="evidence" value="ECO:0007669"/>
    <property type="project" value="UniProtKB-UniRule"/>
</dbReference>
<dbReference type="GO" id="GO:0006437">
    <property type="term" value="P:tyrosyl-tRNA aminoacylation"/>
    <property type="evidence" value="ECO:0007669"/>
    <property type="project" value="UniProtKB-UniRule"/>
</dbReference>
<dbReference type="CDD" id="cd00805">
    <property type="entry name" value="TyrRS_core"/>
    <property type="match status" value="1"/>
</dbReference>
<dbReference type="FunFam" id="1.10.240.10:FF:000001">
    <property type="entry name" value="Tyrosine--tRNA ligase"/>
    <property type="match status" value="1"/>
</dbReference>
<dbReference type="Gene3D" id="3.40.50.620">
    <property type="entry name" value="HUPs"/>
    <property type="match status" value="1"/>
</dbReference>
<dbReference type="Gene3D" id="3.10.290.10">
    <property type="entry name" value="RNA-binding S4 domain"/>
    <property type="match status" value="1"/>
</dbReference>
<dbReference type="Gene3D" id="1.10.240.10">
    <property type="entry name" value="Tyrosyl-Transfer RNA Synthetase"/>
    <property type="match status" value="1"/>
</dbReference>
<dbReference type="HAMAP" id="MF_02006">
    <property type="entry name" value="Tyr_tRNA_synth_type1"/>
    <property type="match status" value="1"/>
</dbReference>
<dbReference type="InterPro" id="IPR001412">
    <property type="entry name" value="aa-tRNA-synth_I_CS"/>
</dbReference>
<dbReference type="InterPro" id="IPR002305">
    <property type="entry name" value="aa-tRNA-synth_Ic"/>
</dbReference>
<dbReference type="InterPro" id="IPR014729">
    <property type="entry name" value="Rossmann-like_a/b/a_fold"/>
</dbReference>
<dbReference type="InterPro" id="IPR036986">
    <property type="entry name" value="S4_RNA-bd_sf"/>
</dbReference>
<dbReference type="InterPro" id="IPR054608">
    <property type="entry name" value="SYY-like_C"/>
</dbReference>
<dbReference type="InterPro" id="IPR002307">
    <property type="entry name" value="Tyr-tRNA-ligase"/>
</dbReference>
<dbReference type="InterPro" id="IPR024088">
    <property type="entry name" value="Tyr-tRNA-ligase_bac-type"/>
</dbReference>
<dbReference type="InterPro" id="IPR024107">
    <property type="entry name" value="Tyr-tRNA-ligase_bac_1"/>
</dbReference>
<dbReference type="NCBIfam" id="TIGR00234">
    <property type="entry name" value="tyrS"/>
    <property type="match status" value="1"/>
</dbReference>
<dbReference type="PANTHER" id="PTHR11766:SF0">
    <property type="entry name" value="TYROSINE--TRNA LIGASE, MITOCHONDRIAL"/>
    <property type="match status" value="1"/>
</dbReference>
<dbReference type="PANTHER" id="PTHR11766">
    <property type="entry name" value="TYROSYL-TRNA SYNTHETASE"/>
    <property type="match status" value="1"/>
</dbReference>
<dbReference type="Pfam" id="PF22421">
    <property type="entry name" value="SYY_C-terminal"/>
    <property type="match status" value="1"/>
</dbReference>
<dbReference type="Pfam" id="PF00579">
    <property type="entry name" value="tRNA-synt_1b"/>
    <property type="match status" value="1"/>
</dbReference>
<dbReference type="PRINTS" id="PR01040">
    <property type="entry name" value="TRNASYNTHTYR"/>
</dbReference>
<dbReference type="SUPFAM" id="SSF55174">
    <property type="entry name" value="Alpha-L RNA-binding motif"/>
    <property type="match status" value="1"/>
</dbReference>
<dbReference type="SUPFAM" id="SSF52374">
    <property type="entry name" value="Nucleotidylyl transferase"/>
    <property type="match status" value="1"/>
</dbReference>
<dbReference type="PROSITE" id="PS00178">
    <property type="entry name" value="AA_TRNA_LIGASE_I"/>
    <property type="match status" value="1"/>
</dbReference>
<dbReference type="PROSITE" id="PS50889">
    <property type="entry name" value="S4"/>
    <property type="match status" value="1"/>
</dbReference>
<protein>
    <recommendedName>
        <fullName evidence="1">Tyrosine--tRNA ligase</fullName>
        <ecNumber evidence="1">6.1.1.1</ecNumber>
    </recommendedName>
    <alternativeName>
        <fullName evidence="1">Tyrosyl-tRNA synthetase</fullName>
        <shortName evidence="1">TyrRS</shortName>
    </alternativeName>
</protein>